<gene>
    <name evidence="1" type="primary">rlmN</name>
    <name type="ordered locus">BceJ2315_18490</name>
    <name type="ORF">BCAL1886</name>
</gene>
<comment type="function">
    <text evidence="1">Specifically methylates position 2 of adenine 2503 in 23S rRNA and position 2 of adenine 37 in tRNAs. m2A2503 modification seems to play a crucial role in the proofreading step occurring at the peptidyl transferase center and thus would serve to optimize ribosomal fidelity.</text>
</comment>
<comment type="catalytic activity">
    <reaction evidence="1">
        <text>adenosine(2503) in 23S rRNA + 2 reduced [2Fe-2S]-[ferredoxin] + 2 S-adenosyl-L-methionine = 2-methyladenosine(2503) in 23S rRNA + 5'-deoxyadenosine + L-methionine + 2 oxidized [2Fe-2S]-[ferredoxin] + S-adenosyl-L-homocysteine</text>
        <dbReference type="Rhea" id="RHEA:42916"/>
        <dbReference type="Rhea" id="RHEA-COMP:10000"/>
        <dbReference type="Rhea" id="RHEA-COMP:10001"/>
        <dbReference type="Rhea" id="RHEA-COMP:10152"/>
        <dbReference type="Rhea" id="RHEA-COMP:10282"/>
        <dbReference type="ChEBI" id="CHEBI:17319"/>
        <dbReference type="ChEBI" id="CHEBI:33737"/>
        <dbReference type="ChEBI" id="CHEBI:33738"/>
        <dbReference type="ChEBI" id="CHEBI:57844"/>
        <dbReference type="ChEBI" id="CHEBI:57856"/>
        <dbReference type="ChEBI" id="CHEBI:59789"/>
        <dbReference type="ChEBI" id="CHEBI:74411"/>
        <dbReference type="ChEBI" id="CHEBI:74497"/>
        <dbReference type="EC" id="2.1.1.192"/>
    </reaction>
</comment>
<comment type="catalytic activity">
    <reaction evidence="1">
        <text>adenosine(37) in tRNA + 2 reduced [2Fe-2S]-[ferredoxin] + 2 S-adenosyl-L-methionine = 2-methyladenosine(37) in tRNA + 5'-deoxyadenosine + L-methionine + 2 oxidized [2Fe-2S]-[ferredoxin] + S-adenosyl-L-homocysteine</text>
        <dbReference type="Rhea" id="RHEA:43332"/>
        <dbReference type="Rhea" id="RHEA-COMP:10000"/>
        <dbReference type="Rhea" id="RHEA-COMP:10001"/>
        <dbReference type="Rhea" id="RHEA-COMP:10162"/>
        <dbReference type="Rhea" id="RHEA-COMP:10485"/>
        <dbReference type="ChEBI" id="CHEBI:17319"/>
        <dbReference type="ChEBI" id="CHEBI:33737"/>
        <dbReference type="ChEBI" id="CHEBI:33738"/>
        <dbReference type="ChEBI" id="CHEBI:57844"/>
        <dbReference type="ChEBI" id="CHEBI:57856"/>
        <dbReference type="ChEBI" id="CHEBI:59789"/>
        <dbReference type="ChEBI" id="CHEBI:74411"/>
        <dbReference type="ChEBI" id="CHEBI:74497"/>
        <dbReference type="EC" id="2.1.1.192"/>
    </reaction>
</comment>
<comment type="cofactor">
    <cofactor evidence="1">
        <name>[4Fe-4S] cluster</name>
        <dbReference type="ChEBI" id="CHEBI:49883"/>
    </cofactor>
    <text evidence="1">Binds 1 [4Fe-4S] cluster. The cluster is coordinated with 3 cysteines and an exchangeable S-adenosyl-L-methionine.</text>
</comment>
<comment type="subcellular location">
    <subcellularLocation>
        <location evidence="1">Cytoplasm</location>
    </subcellularLocation>
</comment>
<comment type="miscellaneous">
    <text evidence="1">Reaction proceeds by a ping-pong mechanism involving intermediate methylation of a conserved cysteine residue.</text>
</comment>
<comment type="similarity">
    <text evidence="1">Belongs to the radical SAM superfamily. RlmN family.</text>
</comment>
<name>RLMN_BURCJ</name>
<feature type="chain" id="PRO_1000188555" description="Dual-specificity RNA methyltransferase RlmN">
    <location>
        <begin position="1"/>
        <end position="379"/>
    </location>
</feature>
<feature type="domain" description="Radical SAM core" evidence="2">
    <location>
        <begin position="101"/>
        <end position="345"/>
    </location>
</feature>
<feature type="active site" description="Proton acceptor" evidence="1">
    <location>
        <position position="95"/>
    </location>
</feature>
<feature type="active site" description="S-methylcysteine intermediate" evidence="1">
    <location>
        <position position="350"/>
    </location>
</feature>
<feature type="binding site" evidence="1">
    <location>
        <position position="115"/>
    </location>
    <ligand>
        <name>[4Fe-4S] cluster</name>
        <dbReference type="ChEBI" id="CHEBI:49883"/>
        <note>4Fe-4S-S-AdoMet</note>
    </ligand>
</feature>
<feature type="binding site" evidence="1">
    <location>
        <position position="119"/>
    </location>
    <ligand>
        <name>[4Fe-4S] cluster</name>
        <dbReference type="ChEBI" id="CHEBI:49883"/>
        <note>4Fe-4S-S-AdoMet</note>
    </ligand>
</feature>
<feature type="binding site" evidence="1">
    <location>
        <position position="122"/>
    </location>
    <ligand>
        <name>[4Fe-4S] cluster</name>
        <dbReference type="ChEBI" id="CHEBI:49883"/>
        <note>4Fe-4S-S-AdoMet</note>
    </ligand>
</feature>
<feature type="binding site" evidence="1">
    <location>
        <begin position="176"/>
        <end position="177"/>
    </location>
    <ligand>
        <name>S-adenosyl-L-methionine</name>
        <dbReference type="ChEBI" id="CHEBI:59789"/>
    </ligand>
</feature>
<feature type="binding site" evidence="1">
    <location>
        <position position="208"/>
    </location>
    <ligand>
        <name>S-adenosyl-L-methionine</name>
        <dbReference type="ChEBI" id="CHEBI:59789"/>
    </ligand>
</feature>
<feature type="binding site" evidence="1">
    <location>
        <begin position="230"/>
        <end position="232"/>
    </location>
    <ligand>
        <name>S-adenosyl-L-methionine</name>
        <dbReference type="ChEBI" id="CHEBI:59789"/>
    </ligand>
</feature>
<feature type="binding site" evidence="1">
    <location>
        <position position="307"/>
    </location>
    <ligand>
        <name>S-adenosyl-L-methionine</name>
        <dbReference type="ChEBI" id="CHEBI:59789"/>
    </ligand>
</feature>
<feature type="disulfide bond" description="(transient)" evidence="1">
    <location>
        <begin position="108"/>
        <end position="350"/>
    </location>
</feature>
<dbReference type="EC" id="2.1.1.192" evidence="1"/>
<dbReference type="EMBL" id="AM747720">
    <property type="protein sequence ID" value="CAR52186.1"/>
    <property type="molecule type" value="Genomic_DNA"/>
</dbReference>
<dbReference type="RefSeq" id="WP_006484457.1">
    <property type="nucleotide sequence ID" value="NC_011000.1"/>
</dbReference>
<dbReference type="SMR" id="B4EAX1"/>
<dbReference type="GeneID" id="71052885"/>
<dbReference type="KEGG" id="bcj:BCAL1886"/>
<dbReference type="eggNOG" id="COG0820">
    <property type="taxonomic scope" value="Bacteria"/>
</dbReference>
<dbReference type="HOGENOM" id="CLU_029101_0_0_4"/>
<dbReference type="BioCyc" id="BCEN216591:G1G1V-2078-MONOMER"/>
<dbReference type="Proteomes" id="UP000001035">
    <property type="component" value="Chromosome 1"/>
</dbReference>
<dbReference type="GO" id="GO:0005737">
    <property type="term" value="C:cytoplasm"/>
    <property type="evidence" value="ECO:0007669"/>
    <property type="project" value="UniProtKB-SubCell"/>
</dbReference>
<dbReference type="GO" id="GO:0051539">
    <property type="term" value="F:4 iron, 4 sulfur cluster binding"/>
    <property type="evidence" value="ECO:0007669"/>
    <property type="project" value="UniProtKB-UniRule"/>
</dbReference>
<dbReference type="GO" id="GO:0046872">
    <property type="term" value="F:metal ion binding"/>
    <property type="evidence" value="ECO:0007669"/>
    <property type="project" value="UniProtKB-KW"/>
</dbReference>
<dbReference type="GO" id="GO:0070040">
    <property type="term" value="F:rRNA (adenine(2503)-C2-)-methyltransferase activity"/>
    <property type="evidence" value="ECO:0007669"/>
    <property type="project" value="UniProtKB-UniRule"/>
</dbReference>
<dbReference type="GO" id="GO:0019843">
    <property type="term" value="F:rRNA binding"/>
    <property type="evidence" value="ECO:0007669"/>
    <property type="project" value="UniProtKB-UniRule"/>
</dbReference>
<dbReference type="GO" id="GO:0002935">
    <property type="term" value="F:tRNA (adenine(37)-C2)-methyltransferase activity"/>
    <property type="evidence" value="ECO:0007669"/>
    <property type="project" value="UniProtKB-UniRule"/>
</dbReference>
<dbReference type="GO" id="GO:0000049">
    <property type="term" value="F:tRNA binding"/>
    <property type="evidence" value="ECO:0007669"/>
    <property type="project" value="UniProtKB-UniRule"/>
</dbReference>
<dbReference type="GO" id="GO:0070475">
    <property type="term" value="P:rRNA base methylation"/>
    <property type="evidence" value="ECO:0007669"/>
    <property type="project" value="UniProtKB-UniRule"/>
</dbReference>
<dbReference type="GO" id="GO:0030488">
    <property type="term" value="P:tRNA methylation"/>
    <property type="evidence" value="ECO:0007669"/>
    <property type="project" value="UniProtKB-UniRule"/>
</dbReference>
<dbReference type="CDD" id="cd01335">
    <property type="entry name" value="Radical_SAM"/>
    <property type="match status" value="1"/>
</dbReference>
<dbReference type="FunFam" id="1.10.150.530:FF:000003">
    <property type="entry name" value="Dual-specificity RNA methyltransferase RlmN"/>
    <property type="match status" value="1"/>
</dbReference>
<dbReference type="FunFam" id="3.20.20.70:FF:000008">
    <property type="entry name" value="Dual-specificity RNA methyltransferase RlmN"/>
    <property type="match status" value="1"/>
</dbReference>
<dbReference type="Gene3D" id="1.10.150.530">
    <property type="match status" value="1"/>
</dbReference>
<dbReference type="Gene3D" id="3.20.20.70">
    <property type="entry name" value="Aldolase class I"/>
    <property type="match status" value="1"/>
</dbReference>
<dbReference type="HAMAP" id="MF_01849">
    <property type="entry name" value="RNA_methyltr_RlmN"/>
    <property type="match status" value="1"/>
</dbReference>
<dbReference type="InterPro" id="IPR013785">
    <property type="entry name" value="Aldolase_TIM"/>
</dbReference>
<dbReference type="InterPro" id="IPR040072">
    <property type="entry name" value="Methyltransferase_A"/>
</dbReference>
<dbReference type="InterPro" id="IPR048641">
    <property type="entry name" value="RlmN_N"/>
</dbReference>
<dbReference type="InterPro" id="IPR027492">
    <property type="entry name" value="RNA_MTrfase_RlmN"/>
</dbReference>
<dbReference type="InterPro" id="IPR004383">
    <property type="entry name" value="rRNA_lsu_MTrfase_RlmN/Cfr"/>
</dbReference>
<dbReference type="InterPro" id="IPR007197">
    <property type="entry name" value="rSAM"/>
</dbReference>
<dbReference type="NCBIfam" id="TIGR00048">
    <property type="entry name" value="rRNA_mod_RlmN"/>
    <property type="match status" value="1"/>
</dbReference>
<dbReference type="PANTHER" id="PTHR30544">
    <property type="entry name" value="23S RRNA METHYLTRANSFERASE"/>
    <property type="match status" value="1"/>
</dbReference>
<dbReference type="PANTHER" id="PTHR30544:SF5">
    <property type="entry name" value="RADICAL SAM CORE DOMAIN-CONTAINING PROTEIN"/>
    <property type="match status" value="1"/>
</dbReference>
<dbReference type="Pfam" id="PF04055">
    <property type="entry name" value="Radical_SAM"/>
    <property type="match status" value="1"/>
</dbReference>
<dbReference type="Pfam" id="PF21016">
    <property type="entry name" value="RlmN_N"/>
    <property type="match status" value="1"/>
</dbReference>
<dbReference type="PIRSF" id="PIRSF006004">
    <property type="entry name" value="CHP00048"/>
    <property type="match status" value="1"/>
</dbReference>
<dbReference type="SFLD" id="SFLDF00275">
    <property type="entry name" value="adenosine_C2_methyltransferase"/>
    <property type="match status" value="1"/>
</dbReference>
<dbReference type="SFLD" id="SFLDG01062">
    <property type="entry name" value="methyltransferase_(Class_A)"/>
    <property type="match status" value="1"/>
</dbReference>
<dbReference type="SUPFAM" id="SSF102114">
    <property type="entry name" value="Radical SAM enzymes"/>
    <property type="match status" value="1"/>
</dbReference>
<dbReference type="PROSITE" id="PS51918">
    <property type="entry name" value="RADICAL_SAM"/>
    <property type="match status" value="1"/>
</dbReference>
<keyword id="KW-0004">4Fe-4S</keyword>
<keyword id="KW-0963">Cytoplasm</keyword>
<keyword id="KW-1015">Disulfide bond</keyword>
<keyword id="KW-0408">Iron</keyword>
<keyword id="KW-0411">Iron-sulfur</keyword>
<keyword id="KW-0479">Metal-binding</keyword>
<keyword id="KW-0489">Methyltransferase</keyword>
<keyword id="KW-0698">rRNA processing</keyword>
<keyword id="KW-0949">S-adenosyl-L-methionine</keyword>
<keyword id="KW-0808">Transferase</keyword>
<keyword id="KW-0819">tRNA processing</keyword>
<protein>
    <recommendedName>
        <fullName evidence="1">Dual-specificity RNA methyltransferase RlmN</fullName>
        <ecNumber evidence="1">2.1.1.192</ecNumber>
    </recommendedName>
    <alternativeName>
        <fullName evidence="1">23S rRNA (adenine(2503)-C(2))-methyltransferase</fullName>
    </alternativeName>
    <alternativeName>
        <fullName evidence="1">23S rRNA m2A2503 methyltransferase</fullName>
    </alternativeName>
    <alternativeName>
        <fullName evidence="1">Ribosomal RNA large subunit methyltransferase N</fullName>
    </alternativeName>
    <alternativeName>
        <fullName evidence="1">tRNA (adenine(37)-C(2))-methyltransferase</fullName>
    </alternativeName>
    <alternativeName>
        <fullName evidence="1">tRNA m2A37 methyltransferase</fullName>
    </alternativeName>
</protein>
<accession>B4EAX1</accession>
<proteinExistence type="inferred from homology"/>
<sequence length="379" mass="41352">MTSETSVNLLDFDAEGLVAYCGSLGEKPFRAKQLQRWIHQYNAGDFDGMTDLAKSLREKLKGRASIVMPEIASDHVSTDGTRKWLIDVGNGNAVETVFIPEETRGTLCVSSQAGCAVNCRFCSTGKQGFSRNLSTAEIIGQLRMAEFALRASLGRAPGPNGKAERVVTNVVMMGMGEPLLNYSAVVPAMRLMLDDNAYGLSRRRVTLSTSGVVPMMDRLGAELPVALAVSLHAPNDALRDELVPLNKKYPLRELMAACQRYLKVAPRDFITFEYCMLDGVNDTEAHARELLAVTRDVPCKFNLIPFNPFPESGLIRSKPEQIKRFAQVLIDAGVVTTVRKTRGDDIDAACGQLAGAVKDRTRLAERTGAAGKIIEVRAV</sequence>
<reference key="1">
    <citation type="journal article" date="2009" name="J. Bacteriol.">
        <title>The genome of Burkholderia cenocepacia J2315, an epidemic pathogen of cystic fibrosis patients.</title>
        <authorList>
            <person name="Holden M.T."/>
            <person name="Seth-Smith H.M."/>
            <person name="Crossman L.C."/>
            <person name="Sebaihia M."/>
            <person name="Bentley S.D."/>
            <person name="Cerdeno-Tarraga A.M."/>
            <person name="Thomson N.R."/>
            <person name="Bason N."/>
            <person name="Quail M.A."/>
            <person name="Sharp S."/>
            <person name="Cherevach I."/>
            <person name="Churcher C."/>
            <person name="Goodhead I."/>
            <person name="Hauser H."/>
            <person name="Holroyd N."/>
            <person name="Mungall K."/>
            <person name="Scott P."/>
            <person name="Walker D."/>
            <person name="White B."/>
            <person name="Rose H."/>
            <person name="Iversen P."/>
            <person name="Mil-Homens D."/>
            <person name="Rocha E.P."/>
            <person name="Fialho A.M."/>
            <person name="Baldwin A."/>
            <person name="Dowson C."/>
            <person name="Barrell B.G."/>
            <person name="Govan J.R."/>
            <person name="Vandamme P."/>
            <person name="Hart C.A."/>
            <person name="Mahenthiralingam E."/>
            <person name="Parkhill J."/>
        </authorList>
    </citation>
    <scope>NUCLEOTIDE SEQUENCE [LARGE SCALE GENOMIC DNA]</scope>
    <source>
        <strain>ATCC BAA-245 / DSM 16553 / LMG 16656 / NCTC 13227 / J2315 / CF5610</strain>
    </source>
</reference>
<evidence type="ECO:0000255" key="1">
    <source>
        <dbReference type="HAMAP-Rule" id="MF_01849"/>
    </source>
</evidence>
<evidence type="ECO:0000255" key="2">
    <source>
        <dbReference type="PROSITE-ProRule" id="PRU01266"/>
    </source>
</evidence>
<organism>
    <name type="scientific">Burkholderia cenocepacia (strain ATCC BAA-245 / DSM 16553 / LMG 16656 / NCTC 13227 / J2315 / CF5610)</name>
    <name type="common">Burkholderia cepacia (strain J2315)</name>
    <dbReference type="NCBI Taxonomy" id="216591"/>
    <lineage>
        <taxon>Bacteria</taxon>
        <taxon>Pseudomonadati</taxon>
        <taxon>Pseudomonadota</taxon>
        <taxon>Betaproteobacteria</taxon>
        <taxon>Burkholderiales</taxon>
        <taxon>Burkholderiaceae</taxon>
        <taxon>Burkholderia</taxon>
        <taxon>Burkholderia cepacia complex</taxon>
    </lineage>
</organism>